<name>RLMF_ECO27</name>
<comment type="function">
    <text evidence="1">Specifically methylates the adenine in position 1618 of 23S rRNA.</text>
</comment>
<comment type="catalytic activity">
    <reaction evidence="1">
        <text>adenosine(1618) in 23S rRNA + S-adenosyl-L-methionine = N(6)-methyladenosine(1618) in 23S rRNA + S-adenosyl-L-homocysteine + H(+)</text>
        <dbReference type="Rhea" id="RHEA:16497"/>
        <dbReference type="Rhea" id="RHEA-COMP:10229"/>
        <dbReference type="Rhea" id="RHEA-COMP:10231"/>
        <dbReference type="ChEBI" id="CHEBI:15378"/>
        <dbReference type="ChEBI" id="CHEBI:57856"/>
        <dbReference type="ChEBI" id="CHEBI:59789"/>
        <dbReference type="ChEBI" id="CHEBI:74411"/>
        <dbReference type="ChEBI" id="CHEBI:74449"/>
        <dbReference type="EC" id="2.1.1.181"/>
    </reaction>
</comment>
<comment type="subcellular location">
    <subcellularLocation>
        <location evidence="1">Cytoplasm</location>
    </subcellularLocation>
</comment>
<comment type="similarity">
    <text evidence="1">Belongs to the methyltransferase superfamily. METTL16/RlmF family.</text>
</comment>
<sequence>MSAQKPGLHPRNRHHSRYDLATLCQVNPELRQFLTLTPAGEQSVDFANPLAVKALNKALLAHFYAVANWDIPDGFLCPPVPGRADYIHHLADLLAEASGTIQANASILDIGVGANCIYPLIGVHEYGWRFTGSETSSQALSSAQAIISANPGLNRAIRLRRQKESGAIFNGIIHKNEQYDATLCNPPFHDSATAARAGSERKRRNLGLNKDDALNFGGQQQELWCEGGEVAFIKKMIEESKGFAKQVMWFTSLVSRGENLPPLYRALTDVGAVKVVKKEMAQGQKQSRFIAWTFMNDEQRRRFVNRQR</sequence>
<proteinExistence type="inferred from homology"/>
<dbReference type="EC" id="2.1.1.181" evidence="1"/>
<dbReference type="EMBL" id="FM180568">
    <property type="protein sequence ID" value="CAS08307.1"/>
    <property type="molecule type" value="Genomic_DNA"/>
</dbReference>
<dbReference type="RefSeq" id="WP_012578859.1">
    <property type="nucleotide sequence ID" value="NC_011601.1"/>
</dbReference>
<dbReference type="SMR" id="B7UM03"/>
<dbReference type="KEGG" id="ecg:E2348C_0759"/>
<dbReference type="HOGENOM" id="CLU_027534_3_0_6"/>
<dbReference type="Proteomes" id="UP000008205">
    <property type="component" value="Chromosome"/>
</dbReference>
<dbReference type="GO" id="GO:0005737">
    <property type="term" value="C:cytoplasm"/>
    <property type="evidence" value="ECO:0007669"/>
    <property type="project" value="UniProtKB-SubCell"/>
</dbReference>
<dbReference type="GO" id="GO:0052907">
    <property type="term" value="F:23S rRNA (adenine(1618)-N(6))-methyltransferase activity"/>
    <property type="evidence" value="ECO:0007669"/>
    <property type="project" value="UniProtKB-EC"/>
</dbReference>
<dbReference type="GO" id="GO:0070475">
    <property type="term" value="P:rRNA base methylation"/>
    <property type="evidence" value="ECO:0007669"/>
    <property type="project" value="TreeGrafter"/>
</dbReference>
<dbReference type="FunFam" id="3.40.50.150:FF:000045">
    <property type="entry name" value="Ribosomal RNA large subunit methyltransferase F"/>
    <property type="match status" value="1"/>
</dbReference>
<dbReference type="Gene3D" id="3.40.50.150">
    <property type="entry name" value="Vaccinia Virus protein VP39"/>
    <property type="match status" value="1"/>
</dbReference>
<dbReference type="HAMAP" id="MF_01848">
    <property type="entry name" value="23SrRNA_methyltr_F"/>
    <property type="match status" value="1"/>
</dbReference>
<dbReference type="InterPro" id="IPR010286">
    <property type="entry name" value="METTL16/RlmF"/>
</dbReference>
<dbReference type="InterPro" id="IPR016909">
    <property type="entry name" value="rRNA_lsu_MeTfrase_F"/>
</dbReference>
<dbReference type="InterPro" id="IPR029063">
    <property type="entry name" value="SAM-dependent_MTases_sf"/>
</dbReference>
<dbReference type="NCBIfam" id="NF008725">
    <property type="entry name" value="PRK11727.1"/>
    <property type="match status" value="1"/>
</dbReference>
<dbReference type="PANTHER" id="PTHR13393:SF0">
    <property type="entry name" value="RNA N6-ADENOSINE-METHYLTRANSFERASE METTL16"/>
    <property type="match status" value="1"/>
</dbReference>
<dbReference type="PANTHER" id="PTHR13393">
    <property type="entry name" value="SAM-DEPENDENT METHYLTRANSFERASE"/>
    <property type="match status" value="1"/>
</dbReference>
<dbReference type="Pfam" id="PF05971">
    <property type="entry name" value="Methyltransf_10"/>
    <property type="match status" value="1"/>
</dbReference>
<dbReference type="PIRSF" id="PIRSF029038">
    <property type="entry name" value="Mtase_YbiN_prd"/>
    <property type="match status" value="1"/>
</dbReference>
<dbReference type="SUPFAM" id="SSF53335">
    <property type="entry name" value="S-adenosyl-L-methionine-dependent methyltransferases"/>
    <property type="match status" value="1"/>
</dbReference>
<organism>
    <name type="scientific">Escherichia coli O127:H6 (strain E2348/69 / EPEC)</name>
    <dbReference type="NCBI Taxonomy" id="574521"/>
    <lineage>
        <taxon>Bacteria</taxon>
        <taxon>Pseudomonadati</taxon>
        <taxon>Pseudomonadota</taxon>
        <taxon>Gammaproteobacteria</taxon>
        <taxon>Enterobacterales</taxon>
        <taxon>Enterobacteriaceae</taxon>
        <taxon>Escherichia</taxon>
    </lineage>
</organism>
<keyword id="KW-0963">Cytoplasm</keyword>
<keyword id="KW-0489">Methyltransferase</keyword>
<keyword id="KW-1185">Reference proteome</keyword>
<keyword id="KW-0698">rRNA processing</keyword>
<keyword id="KW-0949">S-adenosyl-L-methionine</keyword>
<keyword id="KW-0808">Transferase</keyword>
<evidence type="ECO:0000255" key="1">
    <source>
        <dbReference type="HAMAP-Rule" id="MF_01848"/>
    </source>
</evidence>
<protein>
    <recommendedName>
        <fullName evidence="1">Ribosomal RNA large subunit methyltransferase F</fullName>
        <ecNumber evidence="1">2.1.1.181</ecNumber>
    </recommendedName>
    <alternativeName>
        <fullName evidence="1">23S rRNA mA1618 methyltransferase</fullName>
    </alternativeName>
    <alternativeName>
        <fullName evidence="1">rRNA adenine N-6-methyltransferase</fullName>
    </alternativeName>
</protein>
<gene>
    <name evidence="1" type="primary">rlmF</name>
    <name type="ordered locus">E2348C_0759</name>
</gene>
<feature type="chain" id="PRO_1000188517" description="Ribosomal RNA large subunit methyltransferase F">
    <location>
        <begin position="1"/>
        <end position="308"/>
    </location>
</feature>
<reference key="1">
    <citation type="journal article" date="2009" name="J. Bacteriol.">
        <title>Complete genome sequence and comparative genome analysis of enteropathogenic Escherichia coli O127:H6 strain E2348/69.</title>
        <authorList>
            <person name="Iguchi A."/>
            <person name="Thomson N.R."/>
            <person name="Ogura Y."/>
            <person name="Saunders D."/>
            <person name="Ooka T."/>
            <person name="Henderson I.R."/>
            <person name="Harris D."/>
            <person name="Asadulghani M."/>
            <person name="Kurokawa K."/>
            <person name="Dean P."/>
            <person name="Kenny B."/>
            <person name="Quail M.A."/>
            <person name="Thurston S."/>
            <person name="Dougan G."/>
            <person name="Hayashi T."/>
            <person name="Parkhill J."/>
            <person name="Frankel G."/>
        </authorList>
    </citation>
    <scope>NUCLEOTIDE SEQUENCE [LARGE SCALE GENOMIC DNA]</scope>
    <source>
        <strain>E2348/69 / EPEC</strain>
    </source>
</reference>
<accession>B7UM03</accession>